<evidence type="ECO:0000255" key="1">
    <source>
        <dbReference type="HAMAP-Rule" id="MF_01200"/>
    </source>
</evidence>
<sequence>MMNHTPLLLGIRERLIFALDVPSRTQALEWIDQLGDAISFYKIGMELLASGEYFQVLDDLASRGKRVFVDLKFFDIPATVAGVIRRLSQWPISYCTIHGWHAPMMQAATEANTSNMHLLAVTVLTSMTREDLAKMGINREPVDVVVERALAAHMAGMSGVIASGQEAAAIRHAIGSGFSIVCPGIRTNHVPHNDQQRTIGIKAAFANGADAIVVGRPIRMAQDPQAAAEAMQTEIMTALTEPST</sequence>
<comment type="function">
    <text evidence="1">Catalyzes the decarboxylation of orotidine 5'-monophosphate (OMP) to uridine 5'-monophosphate (UMP).</text>
</comment>
<comment type="catalytic activity">
    <reaction evidence="1">
        <text>orotidine 5'-phosphate + H(+) = UMP + CO2</text>
        <dbReference type="Rhea" id="RHEA:11596"/>
        <dbReference type="ChEBI" id="CHEBI:15378"/>
        <dbReference type="ChEBI" id="CHEBI:16526"/>
        <dbReference type="ChEBI" id="CHEBI:57538"/>
        <dbReference type="ChEBI" id="CHEBI:57865"/>
        <dbReference type="EC" id="4.1.1.23"/>
    </reaction>
</comment>
<comment type="pathway">
    <text evidence="1">Pyrimidine metabolism; UMP biosynthesis via de novo pathway; UMP from orotate: step 2/2.</text>
</comment>
<comment type="subunit">
    <text evidence="1">Homodimer.</text>
</comment>
<comment type="similarity">
    <text evidence="1">Belongs to the OMP decarboxylase family. Type 1 subfamily.</text>
</comment>
<proteinExistence type="inferred from homology"/>
<name>PYRF_XYLFT</name>
<organism>
    <name type="scientific">Xylella fastidiosa (strain Temecula1 / ATCC 700964)</name>
    <dbReference type="NCBI Taxonomy" id="183190"/>
    <lineage>
        <taxon>Bacteria</taxon>
        <taxon>Pseudomonadati</taxon>
        <taxon>Pseudomonadota</taxon>
        <taxon>Gammaproteobacteria</taxon>
        <taxon>Lysobacterales</taxon>
        <taxon>Lysobacteraceae</taxon>
        <taxon>Xylella</taxon>
    </lineage>
</organism>
<dbReference type="EC" id="4.1.1.23" evidence="1"/>
<dbReference type="EMBL" id="AE009442">
    <property type="protein sequence ID" value="AAO27932.1"/>
    <property type="molecule type" value="Genomic_DNA"/>
</dbReference>
<dbReference type="SMR" id="Q87FA3"/>
<dbReference type="KEGG" id="xft:PD_0025"/>
<dbReference type="HOGENOM" id="CLU_067069_1_0_6"/>
<dbReference type="UniPathway" id="UPA00070">
    <property type="reaction ID" value="UER00120"/>
</dbReference>
<dbReference type="Proteomes" id="UP000002516">
    <property type="component" value="Chromosome"/>
</dbReference>
<dbReference type="GO" id="GO:0005829">
    <property type="term" value="C:cytosol"/>
    <property type="evidence" value="ECO:0007669"/>
    <property type="project" value="TreeGrafter"/>
</dbReference>
<dbReference type="GO" id="GO:0004590">
    <property type="term" value="F:orotidine-5'-phosphate decarboxylase activity"/>
    <property type="evidence" value="ECO:0007669"/>
    <property type="project" value="UniProtKB-UniRule"/>
</dbReference>
<dbReference type="GO" id="GO:0006207">
    <property type="term" value="P:'de novo' pyrimidine nucleobase biosynthetic process"/>
    <property type="evidence" value="ECO:0007669"/>
    <property type="project" value="InterPro"/>
</dbReference>
<dbReference type="GO" id="GO:0044205">
    <property type="term" value="P:'de novo' UMP biosynthetic process"/>
    <property type="evidence" value="ECO:0007669"/>
    <property type="project" value="UniProtKB-UniRule"/>
</dbReference>
<dbReference type="CDD" id="cd04725">
    <property type="entry name" value="OMP_decarboxylase_like"/>
    <property type="match status" value="1"/>
</dbReference>
<dbReference type="Gene3D" id="3.20.20.70">
    <property type="entry name" value="Aldolase class I"/>
    <property type="match status" value="1"/>
</dbReference>
<dbReference type="HAMAP" id="MF_01200_B">
    <property type="entry name" value="OMPdecase_type1_B"/>
    <property type="match status" value="1"/>
</dbReference>
<dbReference type="InterPro" id="IPR013785">
    <property type="entry name" value="Aldolase_TIM"/>
</dbReference>
<dbReference type="InterPro" id="IPR014732">
    <property type="entry name" value="OMPdecase"/>
</dbReference>
<dbReference type="InterPro" id="IPR018089">
    <property type="entry name" value="OMPdecase_AS"/>
</dbReference>
<dbReference type="InterPro" id="IPR047596">
    <property type="entry name" value="OMPdecase_bac"/>
</dbReference>
<dbReference type="InterPro" id="IPR001754">
    <property type="entry name" value="OMPdeCOase_dom"/>
</dbReference>
<dbReference type="InterPro" id="IPR011060">
    <property type="entry name" value="RibuloseP-bd_barrel"/>
</dbReference>
<dbReference type="NCBIfam" id="NF001273">
    <property type="entry name" value="PRK00230.1"/>
    <property type="match status" value="1"/>
</dbReference>
<dbReference type="NCBIfam" id="TIGR01740">
    <property type="entry name" value="pyrF"/>
    <property type="match status" value="1"/>
</dbReference>
<dbReference type="PANTHER" id="PTHR32119">
    <property type="entry name" value="OROTIDINE 5'-PHOSPHATE DECARBOXYLASE"/>
    <property type="match status" value="1"/>
</dbReference>
<dbReference type="PANTHER" id="PTHR32119:SF2">
    <property type="entry name" value="OROTIDINE 5'-PHOSPHATE DECARBOXYLASE"/>
    <property type="match status" value="1"/>
</dbReference>
<dbReference type="Pfam" id="PF00215">
    <property type="entry name" value="OMPdecase"/>
    <property type="match status" value="1"/>
</dbReference>
<dbReference type="SMART" id="SM00934">
    <property type="entry name" value="OMPdecase"/>
    <property type="match status" value="1"/>
</dbReference>
<dbReference type="SUPFAM" id="SSF51366">
    <property type="entry name" value="Ribulose-phoshate binding barrel"/>
    <property type="match status" value="1"/>
</dbReference>
<dbReference type="PROSITE" id="PS00156">
    <property type="entry name" value="OMPDECASE"/>
    <property type="match status" value="1"/>
</dbReference>
<feature type="chain" id="PRO_0000134605" description="Orotidine 5'-phosphate decarboxylase">
    <location>
        <begin position="1"/>
        <end position="244"/>
    </location>
</feature>
<feature type="active site" description="Proton donor" evidence="1">
    <location>
        <position position="72"/>
    </location>
</feature>
<feature type="binding site" evidence="1">
    <location>
        <position position="20"/>
    </location>
    <ligand>
        <name>substrate</name>
    </ligand>
</feature>
<feature type="binding site" evidence="1">
    <location>
        <position position="42"/>
    </location>
    <ligand>
        <name>substrate</name>
    </ligand>
</feature>
<feature type="binding site" evidence="1">
    <location>
        <begin position="70"/>
        <end position="79"/>
    </location>
    <ligand>
        <name>substrate</name>
    </ligand>
</feature>
<feature type="binding site" evidence="1">
    <location>
        <position position="125"/>
    </location>
    <ligand>
        <name>substrate</name>
    </ligand>
</feature>
<feature type="binding site" evidence="1">
    <location>
        <position position="186"/>
    </location>
    <ligand>
        <name>substrate</name>
    </ligand>
</feature>
<feature type="binding site" evidence="1">
    <location>
        <position position="195"/>
    </location>
    <ligand>
        <name>substrate</name>
    </ligand>
</feature>
<feature type="binding site" evidence="1">
    <location>
        <position position="215"/>
    </location>
    <ligand>
        <name>substrate</name>
    </ligand>
</feature>
<feature type="binding site" evidence="1">
    <location>
        <position position="216"/>
    </location>
    <ligand>
        <name>substrate</name>
    </ligand>
</feature>
<protein>
    <recommendedName>
        <fullName evidence="1">Orotidine 5'-phosphate decarboxylase</fullName>
        <ecNumber evidence="1">4.1.1.23</ecNumber>
    </recommendedName>
    <alternativeName>
        <fullName evidence="1">OMP decarboxylase</fullName>
        <shortName evidence="1">OMPDCase</shortName>
        <shortName evidence="1">OMPdecase</shortName>
    </alternativeName>
</protein>
<keyword id="KW-0210">Decarboxylase</keyword>
<keyword id="KW-0456">Lyase</keyword>
<keyword id="KW-0665">Pyrimidine biosynthesis</keyword>
<keyword id="KW-1185">Reference proteome</keyword>
<reference key="1">
    <citation type="journal article" date="2003" name="J. Bacteriol.">
        <title>Comparative analyses of the complete genome sequences of Pierce's disease and citrus variegated chlorosis strains of Xylella fastidiosa.</title>
        <authorList>
            <person name="Van Sluys M.A."/>
            <person name="de Oliveira M.C."/>
            <person name="Monteiro-Vitorello C.B."/>
            <person name="Miyaki C.Y."/>
            <person name="Furlan L.R."/>
            <person name="Camargo L.E.A."/>
            <person name="da Silva A.C.R."/>
            <person name="Moon D.H."/>
            <person name="Takita M.A."/>
            <person name="Lemos E.G.M."/>
            <person name="Machado M.A."/>
            <person name="Ferro M.I.T."/>
            <person name="da Silva F.R."/>
            <person name="Goldman M.H.S."/>
            <person name="Goldman G.H."/>
            <person name="Lemos M.V.F."/>
            <person name="El-Dorry H."/>
            <person name="Tsai S.M."/>
            <person name="Carrer H."/>
            <person name="Carraro D.M."/>
            <person name="de Oliveira R.C."/>
            <person name="Nunes L.R."/>
            <person name="Siqueira W.J."/>
            <person name="Coutinho L.L."/>
            <person name="Kimura E.T."/>
            <person name="Ferro E.S."/>
            <person name="Harakava R."/>
            <person name="Kuramae E.E."/>
            <person name="Marino C.L."/>
            <person name="Giglioti E."/>
            <person name="Abreu I.L."/>
            <person name="Alves L.M.C."/>
            <person name="do Amaral A.M."/>
            <person name="Baia G.S."/>
            <person name="Blanco S.R."/>
            <person name="Brito M.S."/>
            <person name="Cannavan F.S."/>
            <person name="Celestino A.V."/>
            <person name="da Cunha A.F."/>
            <person name="Fenille R.C."/>
            <person name="Ferro J.A."/>
            <person name="Formighieri E.F."/>
            <person name="Kishi L.T."/>
            <person name="Leoni S.G."/>
            <person name="Oliveira A.R."/>
            <person name="Rosa V.E. Jr."/>
            <person name="Sassaki F.T."/>
            <person name="Sena J.A.D."/>
            <person name="de Souza A.A."/>
            <person name="Truffi D."/>
            <person name="Tsukumo F."/>
            <person name="Yanai G.M."/>
            <person name="Zaros L.G."/>
            <person name="Civerolo E.L."/>
            <person name="Simpson A.J.G."/>
            <person name="Almeida N.F. Jr."/>
            <person name="Setubal J.C."/>
            <person name="Kitajima J.P."/>
        </authorList>
    </citation>
    <scope>NUCLEOTIDE SEQUENCE [LARGE SCALE GENOMIC DNA]</scope>
    <source>
        <strain>Temecula1 / ATCC 700964</strain>
    </source>
</reference>
<accession>Q87FA3</accession>
<gene>
    <name evidence="1" type="primary">pyrF</name>
    <name type="ordered locus">PD_0025</name>
</gene>